<accession>Q54FG0</accession>
<dbReference type="EMBL" id="AAFI02000171">
    <property type="protein sequence ID" value="EAL62006.1"/>
    <property type="molecule type" value="Genomic_DNA"/>
</dbReference>
<dbReference type="RefSeq" id="XP_635511.1">
    <property type="nucleotide sequence ID" value="XM_630419.1"/>
</dbReference>
<dbReference type="SMR" id="Q54FG0"/>
<dbReference type="FunCoup" id="Q54FG0">
    <property type="interactions" value="5"/>
</dbReference>
<dbReference type="STRING" id="44689.Q54FG0"/>
<dbReference type="PaxDb" id="44689-DDB0238325"/>
<dbReference type="EnsemblProtists" id="EAL62006">
    <property type="protein sequence ID" value="EAL62006"/>
    <property type="gene ID" value="DDB_G0290883"/>
</dbReference>
<dbReference type="GeneID" id="8627878"/>
<dbReference type="KEGG" id="ddi:DDB_G0290883"/>
<dbReference type="dictyBase" id="DDB_G0290883">
    <property type="gene designation" value="trafC"/>
</dbReference>
<dbReference type="VEuPathDB" id="AmoebaDB:DDB_G0290883"/>
<dbReference type="eggNOG" id="KOG0297">
    <property type="taxonomic scope" value="Eukaryota"/>
</dbReference>
<dbReference type="HOGENOM" id="CLU_040980_0_0_1"/>
<dbReference type="InParanoid" id="Q54FG0"/>
<dbReference type="OMA" id="HISECEN"/>
<dbReference type="PhylomeDB" id="Q54FG0"/>
<dbReference type="PRO" id="PR:Q54FG0"/>
<dbReference type="Proteomes" id="UP000002195">
    <property type="component" value="Chromosome 5"/>
</dbReference>
<dbReference type="GO" id="GO:0005737">
    <property type="term" value="C:cytoplasm"/>
    <property type="evidence" value="ECO:0000318"/>
    <property type="project" value="GO_Central"/>
</dbReference>
<dbReference type="GO" id="GO:0008270">
    <property type="term" value="F:zinc ion binding"/>
    <property type="evidence" value="ECO:0007669"/>
    <property type="project" value="UniProtKB-KW"/>
</dbReference>
<dbReference type="CDD" id="cd00121">
    <property type="entry name" value="MATH"/>
    <property type="match status" value="1"/>
</dbReference>
<dbReference type="CDD" id="cd16571">
    <property type="entry name" value="RING-HC_SIAHs"/>
    <property type="match status" value="1"/>
</dbReference>
<dbReference type="Gene3D" id="2.60.210.10">
    <property type="entry name" value="Apoptosis, Tumor Necrosis Factor Receptor Associated Protein 2, Chain A"/>
    <property type="match status" value="1"/>
</dbReference>
<dbReference type="Gene3D" id="3.30.40.10">
    <property type="entry name" value="Zinc/RING finger domain, C3HC4 (zinc finger)"/>
    <property type="match status" value="4"/>
</dbReference>
<dbReference type="InterPro" id="IPR002083">
    <property type="entry name" value="MATH/TRAF_dom"/>
</dbReference>
<dbReference type="InterPro" id="IPR049548">
    <property type="entry name" value="Sina-like_RING"/>
</dbReference>
<dbReference type="InterPro" id="IPR008974">
    <property type="entry name" value="TRAF-like"/>
</dbReference>
<dbReference type="InterPro" id="IPR013083">
    <property type="entry name" value="Znf_RING/FYVE/PHD"/>
</dbReference>
<dbReference type="InterPro" id="IPR001293">
    <property type="entry name" value="Znf_TRAF"/>
</dbReference>
<dbReference type="PANTHER" id="PTHR10131:SF65">
    <property type="entry name" value="RING FINGER PROTEIN DG17-RELATED"/>
    <property type="match status" value="1"/>
</dbReference>
<dbReference type="PANTHER" id="PTHR10131">
    <property type="entry name" value="TNF RECEPTOR ASSOCIATED FACTOR"/>
    <property type="match status" value="1"/>
</dbReference>
<dbReference type="Pfam" id="PF22486">
    <property type="entry name" value="MATH_2"/>
    <property type="match status" value="1"/>
</dbReference>
<dbReference type="Pfam" id="PF21362">
    <property type="entry name" value="Sina_RING"/>
    <property type="match status" value="1"/>
</dbReference>
<dbReference type="Pfam" id="PF02176">
    <property type="entry name" value="zf-TRAF"/>
    <property type="match status" value="2"/>
</dbReference>
<dbReference type="SMART" id="SM00061">
    <property type="entry name" value="MATH"/>
    <property type="match status" value="1"/>
</dbReference>
<dbReference type="SUPFAM" id="SSF57850">
    <property type="entry name" value="RING/U-box"/>
    <property type="match status" value="1"/>
</dbReference>
<dbReference type="SUPFAM" id="SSF49599">
    <property type="entry name" value="TRAF domain-like"/>
    <property type="match status" value="2"/>
</dbReference>
<dbReference type="PROSITE" id="PS50144">
    <property type="entry name" value="MATH"/>
    <property type="match status" value="1"/>
</dbReference>
<dbReference type="PROSITE" id="PS50145">
    <property type="entry name" value="ZF_TRAF"/>
    <property type="match status" value="1"/>
</dbReference>
<sequence>MSIDIKFTINDILFNQESLQKKNKYTCPICFEFIYKKQIYQCKSGHHACKECWEKSLETKKECMTCKSVVNSYNDLSRCLMVERAFDKKECCCIYSFTEQIVQGGTNCSPPDGASDQNQRKLIKDEENGCKEKIEVDQIDSHLINCQYKFVTCSFKGCEKILRMNSLESHQNECGFKLVICDFCKRDDIKKKELETHYKTCPMVPIDCSQGCSVKIERKSIIDHIENDCCNTQIPCKYFEQGCKVEMKRSELQNHLERVNHQTYMGILIDKLTNQVGHSKKTHDELLKKIEDLSLLIIKFSDACLKKQVLPKALDICSNGYRNKWIISNYSSLAKSKLNCKSLSSPILLILSHHFQVCVYPKGDENKEYISLYLRVNNIEEPNSLKVEYSFTLVNVLDKSKSITKRVDKIVFISPKEWGWGKFLLSDLINKENGWLSNDDKLTIEIYIKILNEEYEPLES</sequence>
<protein>
    <recommendedName>
        <fullName>TNF receptor-associated factor family protein DDB_G0290883</fullName>
    </recommendedName>
</protein>
<comment type="function">
    <text evidence="1">Probable adapter protein and signal transducer that links members of the tumor necrosis factor receptor family to different signaling pathways by association with the receptor cytoplasmic domain and kinases.</text>
</comment>
<comment type="subcellular location">
    <subcellularLocation>
        <location evidence="1">Cytoplasm</location>
    </subcellularLocation>
</comment>
<comment type="domain">
    <text>The MATH/TRAF domain binds to receptor cytoplasmic domains.</text>
</comment>
<comment type="similarity">
    <text evidence="4">Belongs to the TNF receptor-associated factor family. A subfamily.</text>
</comment>
<name>Y0883_DICDI</name>
<keyword id="KW-0963">Cytoplasm</keyword>
<keyword id="KW-0479">Metal-binding</keyword>
<keyword id="KW-1185">Reference proteome</keyword>
<keyword id="KW-0677">Repeat</keyword>
<keyword id="KW-0862">Zinc</keyword>
<keyword id="KW-0863">Zinc-finger</keyword>
<evidence type="ECO:0000250" key="1"/>
<evidence type="ECO:0000255" key="2">
    <source>
        <dbReference type="PROSITE-ProRule" id="PRU00129"/>
    </source>
</evidence>
<evidence type="ECO:0000255" key="3">
    <source>
        <dbReference type="PROSITE-ProRule" id="PRU00207"/>
    </source>
</evidence>
<evidence type="ECO:0000305" key="4"/>
<proteinExistence type="inferred from homology"/>
<gene>
    <name type="ORF">DDB_G0290883</name>
</gene>
<organism>
    <name type="scientific">Dictyostelium discoideum</name>
    <name type="common">Social amoeba</name>
    <dbReference type="NCBI Taxonomy" id="44689"/>
    <lineage>
        <taxon>Eukaryota</taxon>
        <taxon>Amoebozoa</taxon>
        <taxon>Evosea</taxon>
        <taxon>Eumycetozoa</taxon>
        <taxon>Dictyostelia</taxon>
        <taxon>Dictyosteliales</taxon>
        <taxon>Dictyosteliaceae</taxon>
        <taxon>Dictyostelium</taxon>
    </lineage>
</organism>
<feature type="chain" id="PRO_0000393763" description="TNF receptor-associated factor family protein DDB_G0290883">
    <location>
        <begin position="1"/>
        <end position="460"/>
    </location>
</feature>
<feature type="domain" description="MATH" evidence="2">
    <location>
        <begin position="320"/>
        <end position="448"/>
    </location>
</feature>
<feature type="zinc finger region" description="RING-type; degenerate">
    <location>
        <begin position="27"/>
        <end position="67"/>
    </location>
</feature>
<feature type="zinc finger region" description="TRAF-type 1" evidence="3">
    <location>
        <begin position="141"/>
        <end position="194"/>
    </location>
</feature>
<feature type="zinc finger region" description="TRAF-type 2" evidence="3">
    <location>
        <begin position="196"/>
        <end position="253"/>
    </location>
</feature>
<reference key="1">
    <citation type="journal article" date="2005" name="Nature">
        <title>The genome of the social amoeba Dictyostelium discoideum.</title>
        <authorList>
            <person name="Eichinger L."/>
            <person name="Pachebat J.A."/>
            <person name="Gloeckner G."/>
            <person name="Rajandream M.A."/>
            <person name="Sucgang R."/>
            <person name="Berriman M."/>
            <person name="Song J."/>
            <person name="Olsen R."/>
            <person name="Szafranski K."/>
            <person name="Xu Q."/>
            <person name="Tunggal B."/>
            <person name="Kummerfeld S."/>
            <person name="Madera M."/>
            <person name="Konfortov B.A."/>
            <person name="Rivero F."/>
            <person name="Bankier A.T."/>
            <person name="Lehmann R."/>
            <person name="Hamlin N."/>
            <person name="Davies R."/>
            <person name="Gaudet P."/>
            <person name="Fey P."/>
            <person name="Pilcher K."/>
            <person name="Chen G."/>
            <person name="Saunders D."/>
            <person name="Sodergren E.J."/>
            <person name="Davis P."/>
            <person name="Kerhornou A."/>
            <person name="Nie X."/>
            <person name="Hall N."/>
            <person name="Anjard C."/>
            <person name="Hemphill L."/>
            <person name="Bason N."/>
            <person name="Farbrother P."/>
            <person name="Desany B."/>
            <person name="Just E."/>
            <person name="Morio T."/>
            <person name="Rost R."/>
            <person name="Churcher C.M."/>
            <person name="Cooper J."/>
            <person name="Haydock S."/>
            <person name="van Driessche N."/>
            <person name="Cronin A."/>
            <person name="Goodhead I."/>
            <person name="Muzny D.M."/>
            <person name="Mourier T."/>
            <person name="Pain A."/>
            <person name="Lu M."/>
            <person name="Harper D."/>
            <person name="Lindsay R."/>
            <person name="Hauser H."/>
            <person name="James K.D."/>
            <person name="Quiles M."/>
            <person name="Madan Babu M."/>
            <person name="Saito T."/>
            <person name="Buchrieser C."/>
            <person name="Wardroper A."/>
            <person name="Felder M."/>
            <person name="Thangavelu M."/>
            <person name="Johnson D."/>
            <person name="Knights A."/>
            <person name="Loulseged H."/>
            <person name="Mungall K.L."/>
            <person name="Oliver K."/>
            <person name="Price C."/>
            <person name="Quail M.A."/>
            <person name="Urushihara H."/>
            <person name="Hernandez J."/>
            <person name="Rabbinowitsch E."/>
            <person name="Steffen D."/>
            <person name="Sanders M."/>
            <person name="Ma J."/>
            <person name="Kohara Y."/>
            <person name="Sharp S."/>
            <person name="Simmonds M.N."/>
            <person name="Spiegler S."/>
            <person name="Tivey A."/>
            <person name="Sugano S."/>
            <person name="White B."/>
            <person name="Walker D."/>
            <person name="Woodward J.R."/>
            <person name="Winckler T."/>
            <person name="Tanaka Y."/>
            <person name="Shaulsky G."/>
            <person name="Schleicher M."/>
            <person name="Weinstock G.M."/>
            <person name="Rosenthal A."/>
            <person name="Cox E.C."/>
            <person name="Chisholm R.L."/>
            <person name="Gibbs R.A."/>
            <person name="Loomis W.F."/>
            <person name="Platzer M."/>
            <person name="Kay R.R."/>
            <person name="Williams J.G."/>
            <person name="Dear P.H."/>
            <person name="Noegel A.A."/>
            <person name="Barrell B.G."/>
            <person name="Kuspa A."/>
        </authorList>
    </citation>
    <scope>NUCLEOTIDE SEQUENCE [LARGE SCALE GENOMIC DNA]</scope>
    <source>
        <strain>AX4</strain>
    </source>
</reference>